<accession>Q8KCB8</accession>
<gene>
    <name evidence="1" type="primary">rplU</name>
    <name type="ordered locus">CT1505</name>
</gene>
<dbReference type="EMBL" id="AE006470">
    <property type="protein sequence ID" value="AAM72732.1"/>
    <property type="molecule type" value="Genomic_DNA"/>
</dbReference>
<dbReference type="RefSeq" id="NP_662390.1">
    <property type="nucleotide sequence ID" value="NC_002932.3"/>
</dbReference>
<dbReference type="RefSeq" id="WP_010933171.1">
    <property type="nucleotide sequence ID" value="NC_002932.3"/>
</dbReference>
<dbReference type="SMR" id="Q8KCB8"/>
<dbReference type="STRING" id="194439.CT1505"/>
<dbReference type="EnsemblBacteria" id="AAM72732">
    <property type="protein sequence ID" value="AAM72732"/>
    <property type="gene ID" value="CT1505"/>
</dbReference>
<dbReference type="KEGG" id="cte:CT1505"/>
<dbReference type="PATRIC" id="fig|194439.7.peg.1365"/>
<dbReference type="eggNOG" id="COG0261">
    <property type="taxonomic scope" value="Bacteria"/>
</dbReference>
<dbReference type="HOGENOM" id="CLU_061463_3_2_10"/>
<dbReference type="OrthoDB" id="9813334at2"/>
<dbReference type="Proteomes" id="UP000001007">
    <property type="component" value="Chromosome"/>
</dbReference>
<dbReference type="GO" id="GO:0005737">
    <property type="term" value="C:cytoplasm"/>
    <property type="evidence" value="ECO:0007669"/>
    <property type="project" value="UniProtKB-ARBA"/>
</dbReference>
<dbReference type="GO" id="GO:1990904">
    <property type="term" value="C:ribonucleoprotein complex"/>
    <property type="evidence" value="ECO:0007669"/>
    <property type="project" value="UniProtKB-KW"/>
</dbReference>
<dbReference type="GO" id="GO:0005840">
    <property type="term" value="C:ribosome"/>
    <property type="evidence" value="ECO:0007669"/>
    <property type="project" value="UniProtKB-KW"/>
</dbReference>
<dbReference type="GO" id="GO:0019843">
    <property type="term" value="F:rRNA binding"/>
    <property type="evidence" value="ECO:0007669"/>
    <property type="project" value="UniProtKB-UniRule"/>
</dbReference>
<dbReference type="GO" id="GO:0003735">
    <property type="term" value="F:structural constituent of ribosome"/>
    <property type="evidence" value="ECO:0007669"/>
    <property type="project" value="InterPro"/>
</dbReference>
<dbReference type="GO" id="GO:0006412">
    <property type="term" value="P:translation"/>
    <property type="evidence" value="ECO:0007669"/>
    <property type="project" value="UniProtKB-UniRule"/>
</dbReference>
<dbReference type="HAMAP" id="MF_01363">
    <property type="entry name" value="Ribosomal_bL21"/>
    <property type="match status" value="1"/>
</dbReference>
<dbReference type="InterPro" id="IPR028909">
    <property type="entry name" value="bL21-like"/>
</dbReference>
<dbReference type="InterPro" id="IPR036164">
    <property type="entry name" value="bL21-like_sf"/>
</dbReference>
<dbReference type="InterPro" id="IPR001787">
    <property type="entry name" value="Ribosomal_bL21"/>
</dbReference>
<dbReference type="InterPro" id="IPR018258">
    <property type="entry name" value="Ribosomal_bL21_CS"/>
</dbReference>
<dbReference type="NCBIfam" id="TIGR00061">
    <property type="entry name" value="L21"/>
    <property type="match status" value="1"/>
</dbReference>
<dbReference type="PANTHER" id="PTHR21349">
    <property type="entry name" value="50S RIBOSOMAL PROTEIN L21"/>
    <property type="match status" value="1"/>
</dbReference>
<dbReference type="PANTHER" id="PTHR21349:SF0">
    <property type="entry name" value="LARGE RIBOSOMAL SUBUNIT PROTEIN BL21M"/>
    <property type="match status" value="1"/>
</dbReference>
<dbReference type="Pfam" id="PF00829">
    <property type="entry name" value="Ribosomal_L21p"/>
    <property type="match status" value="1"/>
</dbReference>
<dbReference type="SUPFAM" id="SSF141091">
    <property type="entry name" value="L21p-like"/>
    <property type="match status" value="1"/>
</dbReference>
<dbReference type="PROSITE" id="PS01169">
    <property type="entry name" value="RIBOSOMAL_L21"/>
    <property type="match status" value="1"/>
</dbReference>
<reference key="1">
    <citation type="journal article" date="2002" name="Proc. Natl. Acad. Sci. U.S.A.">
        <title>The complete genome sequence of Chlorobium tepidum TLS, a photosynthetic, anaerobic, green-sulfur bacterium.</title>
        <authorList>
            <person name="Eisen J.A."/>
            <person name="Nelson K.E."/>
            <person name="Paulsen I.T."/>
            <person name="Heidelberg J.F."/>
            <person name="Wu M."/>
            <person name="Dodson R.J."/>
            <person name="DeBoy R.T."/>
            <person name="Gwinn M.L."/>
            <person name="Nelson W.C."/>
            <person name="Haft D.H."/>
            <person name="Hickey E.K."/>
            <person name="Peterson J.D."/>
            <person name="Durkin A.S."/>
            <person name="Kolonay J.F."/>
            <person name="Yang F."/>
            <person name="Holt I.E."/>
            <person name="Umayam L.A."/>
            <person name="Mason T.M."/>
            <person name="Brenner M."/>
            <person name="Shea T.P."/>
            <person name="Parksey D.S."/>
            <person name="Nierman W.C."/>
            <person name="Feldblyum T.V."/>
            <person name="Hansen C.L."/>
            <person name="Craven M.B."/>
            <person name="Radune D."/>
            <person name="Vamathevan J.J."/>
            <person name="Khouri H.M."/>
            <person name="White O."/>
            <person name="Gruber T.M."/>
            <person name="Ketchum K.A."/>
            <person name="Venter J.C."/>
            <person name="Tettelin H."/>
            <person name="Bryant D.A."/>
            <person name="Fraser C.M."/>
        </authorList>
    </citation>
    <scope>NUCLEOTIDE SEQUENCE [LARGE SCALE GENOMIC DNA]</scope>
    <source>
        <strain>ATCC 49652 / DSM 12025 / NBRC 103806 / TLS</strain>
    </source>
</reference>
<proteinExistence type="inferred from homology"/>
<sequence length="95" mass="10841">MQALIEISDKQYLVKAGDKIFVPKQKAAAGDVIEVKTLMQVNQADSALKAGTATIKVLEHVRDETIIVFRKKRRKRFQKRNGHRQHMTQVEVLSL</sequence>
<keyword id="KW-1185">Reference proteome</keyword>
<keyword id="KW-0687">Ribonucleoprotein</keyword>
<keyword id="KW-0689">Ribosomal protein</keyword>
<keyword id="KW-0694">RNA-binding</keyword>
<keyword id="KW-0699">rRNA-binding</keyword>
<comment type="function">
    <text evidence="1">This protein binds to 23S rRNA in the presence of protein L20.</text>
</comment>
<comment type="subunit">
    <text evidence="1">Part of the 50S ribosomal subunit. Contacts protein L20.</text>
</comment>
<comment type="similarity">
    <text evidence="1">Belongs to the bacterial ribosomal protein bL21 family.</text>
</comment>
<feature type="chain" id="PRO_0000270653" description="Large ribosomal subunit protein bL21">
    <location>
        <begin position="1"/>
        <end position="95"/>
    </location>
</feature>
<evidence type="ECO:0000255" key="1">
    <source>
        <dbReference type="HAMAP-Rule" id="MF_01363"/>
    </source>
</evidence>
<evidence type="ECO:0000305" key="2"/>
<organism>
    <name type="scientific">Chlorobaculum tepidum (strain ATCC 49652 / DSM 12025 / NBRC 103806 / TLS)</name>
    <name type="common">Chlorobium tepidum</name>
    <dbReference type="NCBI Taxonomy" id="194439"/>
    <lineage>
        <taxon>Bacteria</taxon>
        <taxon>Pseudomonadati</taxon>
        <taxon>Chlorobiota</taxon>
        <taxon>Chlorobiia</taxon>
        <taxon>Chlorobiales</taxon>
        <taxon>Chlorobiaceae</taxon>
        <taxon>Chlorobaculum</taxon>
    </lineage>
</organism>
<name>RL21_CHLTE</name>
<protein>
    <recommendedName>
        <fullName evidence="1">Large ribosomal subunit protein bL21</fullName>
    </recommendedName>
    <alternativeName>
        <fullName evidence="2">50S ribosomal protein L21</fullName>
    </alternativeName>
</protein>